<feature type="chain" id="PRO_1000072934" description="1-(5-phosphoribosyl)-5-[(5-phosphoribosylamino)methylideneamino] imidazole-4-carboxamide isomerase">
    <location>
        <begin position="1"/>
        <end position="246"/>
    </location>
</feature>
<feature type="active site" description="Proton acceptor" evidence="1">
    <location>
        <position position="8"/>
    </location>
</feature>
<feature type="active site" description="Proton donor" evidence="1">
    <location>
        <position position="129"/>
    </location>
</feature>
<reference key="1">
    <citation type="submission" date="2007-03" db="EMBL/GenBank/DDBJ databases">
        <title>Complete sequence of Desulfotomaculum reducens MI-1.</title>
        <authorList>
            <consortium name="US DOE Joint Genome Institute"/>
            <person name="Copeland A."/>
            <person name="Lucas S."/>
            <person name="Lapidus A."/>
            <person name="Barry K."/>
            <person name="Detter J.C."/>
            <person name="Glavina del Rio T."/>
            <person name="Hammon N."/>
            <person name="Israni S."/>
            <person name="Dalin E."/>
            <person name="Tice H."/>
            <person name="Pitluck S."/>
            <person name="Sims D."/>
            <person name="Brettin T."/>
            <person name="Bruce D."/>
            <person name="Han C."/>
            <person name="Tapia R."/>
            <person name="Schmutz J."/>
            <person name="Larimer F."/>
            <person name="Land M."/>
            <person name="Hauser L."/>
            <person name="Kyrpides N."/>
            <person name="Kim E."/>
            <person name="Tebo B.M."/>
            <person name="Richardson P."/>
        </authorList>
    </citation>
    <scope>NUCLEOTIDE SEQUENCE [LARGE SCALE GENOMIC DNA]</scope>
    <source>
        <strain>ATCC BAA-1160 / DSM 100696 / MI-1</strain>
    </source>
</reference>
<dbReference type="EC" id="5.3.1.16" evidence="1"/>
<dbReference type="EMBL" id="CP000612">
    <property type="protein sequence ID" value="ABO50861.1"/>
    <property type="molecule type" value="Genomic_DNA"/>
</dbReference>
<dbReference type="RefSeq" id="WP_011878659.1">
    <property type="nucleotide sequence ID" value="NC_009253.1"/>
</dbReference>
<dbReference type="SMR" id="A4J708"/>
<dbReference type="STRING" id="349161.Dred_2351"/>
<dbReference type="KEGG" id="drm:Dred_2351"/>
<dbReference type="eggNOG" id="COG0106">
    <property type="taxonomic scope" value="Bacteria"/>
</dbReference>
<dbReference type="HOGENOM" id="CLU_048577_1_1_9"/>
<dbReference type="OrthoDB" id="9807749at2"/>
<dbReference type="UniPathway" id="UPA00031">
    <property type="reaction ID" value="UER00009"/>
</dbReference>
<dbReference type="Proteomes" id="UP000001556">
    <property type="component" value="Chromosome"/>
</dbReference>
<dbReference type="GO" id="GO:0005737">
    <property type="term" value="C:cytoplasm"/>
    <property type="evidence" value="ECO:0007669"/>
    <property type="project" value="UniProtKB-SubCell"/>
</dbReference>
<dbReference type="GO" id="GO:0003949">
    <property type="term" value="F:1-(5-phosphoribosyl)-5-[(5-phosphoribosylamino)methylideneamino]imidazole-4-carboxamide isomerase activity"/>
    <property type="evidence" value="ECO:0007669"/>
    <property type="project" value="UniProtKB-UniRule"/>
</dbReference>
<dbReference type="GO" id="GO:0000105">
    <property type="term" value="P:L-histidine biosynthetic process"/>
    <property type="evidence" value="ECO:0007669"/>
    <property type="project" value="UniProtKB-UniRule"/>
</dbReference>
<dbReference type="GO" id="GO:0000162">
    <property type="term" value="P:L-tryptophan biosynthetic process"/>
    <property type="evidence" value="ECO:0007669"/>
    <property type="project" value="TreeGrafter"/>
</dbReference>
<dbReference type="CDD" id="cd04732">
    <property type="entry name" value="HisA"/>
    <property type="match status" value="1"/>
</dbReference>
<dbReference type="FunFam" id="3.20.20.70:FF:000009">
    <property type="entry name" value="1-(5-phosphoribosyl)-5-[(5-phosphoribosylamino)methylideneamino] imidazole-4-carboxamide isomerase"/>
    <property type="match status" value="1"/>
</dbReference>
<dbReference type="Gene3D" id="3.20.20.70">
    <property type="entry name" value="Aldolase class I"/>
    <property type="match status" value="1"/>
</dbReference>
<dbReference type="HAMAP" id="MF_01014">
    <property type="entry name" value="HisA"/>
    <property type="match status" value="1"/>
</dbReference>
<dbReference type="InterPro" id="IPR013785">
    <property type="entry name" value="Aldolase_TIM"/>
</dbReference>
<dbReference type="InterPro" id="IPR006062">
    <property type="entry name" value="His_biosynth"/>
</dbReference>
<dbReference type="InterPro" id="IPR006063">
    <property type="entry name" value="HisA_bact_arch"/>
</dbReference>
<dbReference type="InterPro" id="IPR044524">
    <property type="entry name" value="Isoase_HisA-like"/>
</dbReference>
<dbReference type="InterPro" id="IPR023016">
    <property type="entry name" value="Isoase_HisA-like_bact"/>
</dbReference>
<dbReference type="InterPro" id="IPR011060">
    <property type="entry name" value="RibuloseP-bd_barrel"/>
</dbReference>
<dbReference type="NCBIfam" id="TIGR00007">
    <property type="entry name" value="1-(5-phosphoribosyl)-5-[(5-phosphoribosylamino)methylideneamino]imidazole-4-carboxamide isomerase"/>
    <property type="match status" value="1"/>
</dbReference>
<dbReference type="PANTHER" id="PTHR43090">
    <property type="entry name" value="1-(5-PHOSPHORIBOSYL)-5-[(5-PHOSPHORIBOSYLAMINO)METHYLIDENEAMINO] IMIDAZOLE-4-CARBOXAMIDE ISOMERASE"/>
    <property type="match status" value="1"/>
</dbReference>
<dbReference type="PANTHER" id="PTHR43090:SF2">
    <property type="entry name" value="1-(5-PHOSPHORIBOSYL)-5-[(5-PHOSPHORIBOSYLAMINO)METHYLIDENEAMINO] IMIDAZOLE-4-CARBOXAMIDE ISOMERASE"/>
    <property type="match status" value="1"/>
</dbReference>
<dbReference type="Pfam" id="PF00977">
    <property type="entry name" value="His_biosynth"/>
    <property type="match status" value="1"/>
</dbReference>
<dbReference type="SUPFAM" id="SSF51366">
    <property type="entry name" value="Ribulose-phoshate binding barrel"/>
    <property type="match status" value="1"/>
</dbReference>
<comment type="catalytic activity">
    <reaction evidence="1">
        <text>1-(5-phospho-beta-D-ribosyl)-5-[(5-phospho-beta-D-ribosylamino)methylideneamino]imidazole-4-carboxamide = 5-[(5-phospho-1-deoxy-D-ribulos-1-ylimino)methylamino]-1-(5-phospho-beta-D-ribosyl)imidazole-4-carboxamide</text>
        <dbReference type="Rhea" id="RHEA:15469"/>
        <dbReference type="ChEBI" id="CHEBI:58435"/>
        <dbReference type="ChEBI" id="CHEBI:58525"/>
        <dbReference type="EC" id="5.3.1.16"/>
    </reaction>
</comment>
<comment type="pathway">
    <text evidence="1">Amino-acid biosynthesis; L-histidine biosynthesis; L-histidine from 5-phospho-alpha-D-ribose 1-diphosphate: step 4/9.</text>
</comment>
<comment type="subcellular location">
    <subcellularLocation>
        <location evidence="1">Cytoplasm</location>
    </subcellularLocation>
</comment>
<comment type="similarity">
    <text evidence="1">Belongs to the HisA/HisF family.</text>
</comment>
<sequence length="246" mass="26339">MILFPAIDLKEGQCVRLVEGRMDSATVYSNDPGSMARLWQDQGAQYIHVVDLDGAFAGQPRNRQSIAQIVQGVQVPVQVGGGIRDLETIEDLLSLGVDRVILGSAAILKPELVAEACRKYGQRILLGIDAKDGQVAIQGWGETVKRTALDLALEMKQLGIERAVFTDIRRDGKLSGPNLAATGELARNSGLRVIASGGVASLEDIRQLKKLEQDGVEGAILGKALYTNAVKLPEALVIARGEESVC</sequence>
<accession>A4J708</accession>
<protein>
    <recommendedName>
        <fullName evidence="1">1-(5-phosphoribosyl)-5-[(5-phosphoribosylamino)methylideneamino] imidazole-4-carboxamide isomerase</fullName>
        <ecNumber evidence="1">5.3.1.16</ecNumber>
    </recommendedName>
    <alternativeName>
        <fullName evidence="1">Phosphoribosylformimino-5-aminoimidazole carboxamide ribotide isomerase</fullName>
    </alternativeName>
</protein>
<evidence type="ECO:0000255" key="1">
    <source>
        <dbReference type="HAMAP-Rule" id="MF_01014"/>
    </source>
</evidence>
<gene>
    <name evidence="1" type="primary">hisA</name>
    <name type="ordered locus">Dred_2351</name>
</gene>
<name>HIS4_DESRM</name>
<keyword id="KW-0028">Amino-acid biosynthesis</keyword>
<keyword id="KW-0963">Cytoplasm</keyword>
<keyword id="KW-0368">Histidine biosynthesis</keyword>
<keyword id="KW-0413">Isomerase</keyword>
<keyword id="KW-1185">Reference proteome</keyword>
<proteinExistence type="inferred from homology"/>
<organism>
    <name type="scientific">Desulforamulus reducens (strain ATCC BAA-1160 / DSM 100696 / MI-1)</name>
    <name type="common">Desulfotomaculum reducens</name>
    <dbReference type="NCBI Taxonomy" id="349161"/>
    <lineage>
        <taxon>Bacteria</taxon>
        <taxon>Bacillati</taxon>
        <taxon>Bacillota</taxon>
        <taxon>Clostridia</taxon>
        <taxon>Eubacteriales</taxon>
        <taxon>Peptococcaceae</taxon>
        <taxon>Desulforamulus</taxon>
    </lineage>
</organism>